<evidence type="ECO:0000255" key="1">
    <source>
        <dbReference type="HAMAP-Rule" id="MF_01411"/>
    </source>
</evidence>
<accession>Q5X878</accession>
<reference key="1">
    <citation type="journal article" date="2004" name="Nat. Genet.">
        <title>Evidence in the Legionella pneumophila genome for exploitation of host cell functions and high genome plasticity.</title>
        <authorList>
            <person name="Cazalet C."/>
            <person name="Rusniok C."/>
            <person name="Brueggemann H."/>
            <person name="Zidane N."/>
            <person name="Magnier A."/>
            <person name="Ma L."/>
            <person name="Tichit M."/>
            <person name="Jarraud S."/>
            <person name="Bouchier C."/>
            <person name="Vandenesch F."/>
            <person name="Kunst F."/>
            <person name="Etienne J."/>
            <person name="Glaser P."/>
            <person name="Buchrieser C."/>
        </authorList>
    </citation>
    <scope>NUCLEOTIDE SEQUENCE [LARGE SCALE GENOMIC DNA]</scope>
    <source>
        <strain>Paris</strain>
    </source>
</reference>
<name>LPTD_LEGPA</name>
<dbReference type="EMBL" id="CR628336">
    <property type="protein sequence ID" value="CAH11523.1"/>
    <property type="molecule type" value="Genomic_DNA"/>
</dbReference>
<dbReference type="RefSeq" id="WP_011212998.1">
    <property type="nucleotide sequence ID" value="NC_006368.1"/>
</dbReference>
<dbReference type="SMR" id="Q5X878"/>
<dbReference type="KEGG" id="lpp:lpp0375"/>
<dbReference type="LegioList" id="lpp0375"/>
<dbReference type="HOGENOM" id="CLU_009039_0_0_6"/>
<dbReference type="GO" id="GO:0009279">
    <property type="term" value="C:cell outer membrane"/>
    <property type="evidence" value="ECO:0007669"/>
    <property type="project" value="UniProtKB-SubCell"/>
</dbReference>
<dbReference type="GO" id="GO:1990351">
    <property type="term" value="C:transporter complex"/>
    <property type="evidence" value="ECO:0007669"/>
    <property type="project" value="TreeGrafter"/>
</dbReference>
<dbReference type="GO" id="GO:0043165">
    <property type="term" value="P:Gram-negative-bacterium-type cell outer membrane assembly"/>
    <property type="evidence" value="ECO:0007669"/>
    <property type="project" value="UniProtKB-UniRule"/>
</dbReference>
<dbReference type="GO" id="GO:0015920">
    <property type="term" value="P:lipopolysaccharide transport"/>
    <property type="evidence" value="ECO:0007669"/>
    <property type="project" value="InterPro"/>
</dbReference>
<dbReference type="HAMAP" id="MF_01411">
    <property type="entry name" value="LPS_assembly_LptD"/>
    <property type="match status" value="1"/>
</dbReference>
<dbReference type="InterPro" id="IPR020889">
    <property type="entry name" value="LipoPS_assembly_LptD"/>
</dbReference>
<dbReference type="InterPro" id="IPR050218">
    <property type="entry name" value="LptD"/>
</dbReference>
<dbReference type="InterPro" id="IPR007543">
    <property type="entry name" value="LptD_C"/>
</dbReference>
<dbReference type="InterPro" id="IPR005653">
    <property type="entry name" value="OstA-like_N"/>
</dbReference>
<dbReference type="PANTHER" id="PTHR30189">
    <property type="entry name" value="LPS-ASSEMBLY PROTEIN"/>
    <property type="match status" value="1"/>
</dbReference>
<dbReference type="PANTHER" id="PTHR30189:SF1">
    <property type="entry name" value="LPS-ASSEMBLY PROTEIN LPTD"/>
    <property type="match status" value="1"/>
</dbReference>
<dbReference type="Pfam" id="PF04453">
    <property type="entry name" value="LptD"/>
    <property type="match status" value="1"/>
</dbReference>
<dbReference type="Pfam" id="PF03968">
    <property type="entry name" value="LptD_N"/>
    <property type="match status" value="1"/>
</dbReference>
<gene>
    <name evidence="1" type="primary">lptD</name>
    <name type="synonym">imp</name>
    <name type="synonym">ostA</name>
    <name type="ordered locus">lpp0375</name>
</gene>
<organism>
    <name type="scientific">Legionella pneumophila (strain Paris)</name>
    <dbReference type="NCBI Taxonomy" id="297246"/>
    <lineage>
        <taxon>Bacteria</taxon>
        <taxon>Pseudomonadati</taxon>
        <taxon>Pseudomonadota</taxon>
        <taxon>Gammaproteobacteria</taxon>
        <taxon>Legionellales</taxon>
        <taxon>Legionellaceae</taxon>
        <taxon>Legionella</taxon>
    </lineage>
</organism>
<feature type="signal peptide" evidence="1">
    <location>
        <begin position="1"/>
        <end position="21"/>
    </location>
</feature>
<feature type="chain" id="PRO_0000281614" description="LPS-assembly protein LptD">
    <location>
        <begin position="22"/>
        <end position="839"/>
    </location>
</feature>
<sequence length="839" mass="95990">MAIGITACVLSLINYQGLAYSAALINEPIQACVIAREVDLTDDIRTKFAQCLGWQADQSSPVCLGFYKPITVTPLASPDEVRILADTASFYRTQRSTLSGHVEMQQGQRVVNAQTAYVYRDPKTNEVTKIEFLNHVRYLEPDRMMIARKAVVYPQDKSGEVEDVLYRFNTNRSNALLPAWGRASLIKRFANQDYFLKEATYTTCAPQDKAWAIEAESISIDNEKGKGIARNAKLRIHEWPVLYTPYLSFPTNRDRKSGFLMPIVGYSNVGGADLGIPYYWNMAPNYDMTLVPHLYTKRGLMLGGQFRYLTSKSTGTFNGNFLPKDKAFGRFLQDNEVEFPQIRGLSTNRWEVNFVDSTQFLSDLQLNVNFQQVSDDYYLQDFSTNLASVTQRQLLRQADLTYTTENWTFRGMGQSYQTLHPINEIPVSPVYERLPQLMARGYYDDLPFNANFNILGQYDQFHWPNDSWNIALNNMPQGPRFHLNPILSVPMMKPWGYVTPSVQFVENYYDISRNYTWGTSRANYNLTIPRYSLDGGLYFERDLHLKGTYYIQTLEPRLFYLRVPYYNQTLIPVYDSGFMIFNVDQLFRTNRFSGFDRIGDANQLSYALTTRWLEDESGAEKANFSIGQIKYFSERRVQLCQSPTGFCTDNPDTFGNLSSTFGTSPVASRAVYKFNPAWGITGDYIWDPATRATNNADLNLHYQPARNAIINGGYSYLVNGDVTQVRNNDTENNALHQAILSAAWPLSEKWSGIGAYSYNISKNYSMMSFLGVQYDSCCWAMRILGGRTFRSLNEEFEPRYNNNIYLQILLKGLGSVASSDPSGILNTYIPGYYDPFRRR</sequence>
<protein>
    <recommendedName>
        <fullName evidence="1">LPS-assembly protein LptD</fullName>
    </recommendedName>
</protein>
<comment type="function">
    <text evidence="1">Together with LptE, is involved in the assembly of lipopolysaccharide (LPS) at the surface of the outer membrane.</text>
</comment>
<comment type="subunit">
    <text evidence="1">Component of the lipopolysaccharide transport and assembly complex. Interacts with LptE and LptA.</text>
</comment>
<comment type="subcellular location">
    <subcellularLocation>
        <location evidence="1">Cell outer membrane</location>
    </subcellularLocation>
</comment>
<comment type="similarity">
    <text evidence="1">Belongs to the LptD family.</text>
</comment>
<keyword id="KW-0998">Cell outer membrane</keyword>
<keyword id="KW-0472">Membrane</keyword>
<keyword id="KW-0732">Signal</keyword>
<proteinExistence type="inferred from homology"/>